<feature type="chain" id="PRO_0000198500" description="Ribonuclease P protein component">
    <location>
        <begin position="1"/>
        <end position="156"/>
    </location>
</feature>
<feature type="region of interest" description="Disordered" evidence="2">
    <location>
        <begin position="126"/>
        <end position="156"/>
    </location>
</feature>
<comment type="function">
    <text evidence="1">RNaseP catalyzes the removal of the 5'-leader sequence from pre-tRNA to produce the mature 5'-terminus. It can also cleave other RNA substrates such as 4.5S RNA. The protein component plays an auxiliary but essential role in vivo by binding to the 5'-leader sequence and broadening the substrate specificity of the ribozyme.</text>
</comment>
<comment type="catalytic activity">
    <reaction evidence="1">
        <text>Endonucleolytic cleavage of RNA, removing 5'-extranucleotides from tRNA precursor.</text>
        <dbReference type="EC" id="3.1.26.5"/>
    </reaction>
</comment>
<comment type="subunit">
    <text evidence="1">Consists of a catalytic RNA component (M1 or rnpB) and a protein subunit.</text>
</comment>
<comment type="similarity">
    <text evidence="1">Belongs to the RnpA family.</text>
</comment>
<accession>Q5YMR7</accession>
<reference key="1">
    <citation type="journal article" date="2004" name="Proc. Natl. Acad. Sci. U.S.A.">
        <title>The complete genomic sequence of Nocardia farcinica IFM 10152.</title>
        <authorList>
            <person name="Ishikawa J."/>
            <person name="Yamashita A."/>
            <person name="Mikami Y."/>
            <person name="Hoshino Y."/>
            <person name="Kurita H."/>
            <person name="Hotta K."/>
            <person name="Shiba T."/>
            <person name="Hattori M."/>
        </authorList>
    </citation>
    <scope>NUCLEOTIDE SEQUENCE [LARGE SCALE GENOMIC DNA]</scope>
    <source>
        <strain>IFM 10152</strain>
    </source>
</reference>
<protein>
    <recommendedName>
        <fullName evidence="1">Ribonuclease P protein component</fullName>
        <shortName evidence="1">RNase P protein</shortName>
        <shortName evidence="1">RNaseP protein</shortName>
        <ecNumber evidence="1">3.1.26.5</ecNumber>
    </recommendedName>
    <alternativeName>
        <fullName evidence="1">Protein C5</fullName>
    </alternativeName>
</protein>
<organism>
    <name type="scientific">Nocardia farcinica (strain IFM 10152)</name>
    <dbReference type="NCBI Taxonomy" id="247156"/>
    <lineage>
        <taxon>Bacteria</taxon>
        <taxon>Bacillati</taxon>
        <taxon>Actinomycetota</taxon>
        <taxon>Actinomycetes</taxon>
        <taxon>Mycobacteriales</taxon>
        <taxon>Nocardiaceae</taxon>
        <taxon>Nocardia</taxon>
    </lineage>
</organism>
<evidence type="ECO:0000255" key="1">
    <source>
        <dbReference type="HAMAP-Rule" id="MF_00227"/>
    </source>
</evidence>
<evidence type="ECO:0000256" key="2">
    <source>
        <dbReference type="SAM" id="MobiDB-lite"/>
    </source>
</evidence>
<sequence length="156" mass="16882">MLPEPYRLHHRADFSRTVRRGQRIGRRDLVVHAFVHTYDELAHATERHGDPVAAGSFVRVGGPRFGLIVSKAVGSAVVRHRVARRLRHMCATLVDEVPADADVVIRALPGAATADSAELARQVRSGLRKLGVTPGGGRSPAPRAHSGARPRTDARS</sequence>
<keyword id="KW-0255">Endonuclease</keyword>
<keyword id="KW-0378">Hydrolase</keyword>
<keyword id="KW-0540">Nuclease</keyword>
<keyword id="KW-1185">Reference proteome</keyword>
<keyword id="KW-0694">RNA-binding</keyword>
<keyword id="KW-0819">tRNA processing</keyword>
<gene>
    <name evidence="1" type="primary">rnpA</name>
    <name type="ordered locus">NFA_56720</name>
</gene>
<proteinExistence type="inferred from homology"/>
<dbReference type="EC" id="3.1.26.5" evidence="1"/>
<dbReference type="EMBL" id="AP006618">
    <property type="protein sequence ID" value="BAD60524.1"/>
    <property type="molecule type" value="Genomic_DNA"/>
</dbReference>
<dbReference type="RefSeq" id="WP_011212206.1">
    <property type="nucleotide sequence ID" value="NC_006361.1"/>
</dbReference>
<dbReference type="SMR" id="Q5YMR7"/>
<dbReference type="STRING" id="247156.NFA_56720"/>
<dbReference type="GeneID" id="61136235"/>
<dbReference type="KEGG" id="nfa:NFA_56720"/>
<dbReference type="eggNOG" id="COG0594">
    <property type="taxonomic scope" value="Bacteria"/>
</dbReference>
<dbReference type="HOGENOM" id="CLU_117179_4_1_11"/>
<dbReference type="OrthoDB" id="196964at2"/>
<dbReference type="Proteomes" id="UP000006820">
    <property type="component" value="Chromosome"/>
</dbReference>
<dbReference type="GO" id="GO:0030677">
    <property type="term" value="C:ribonuclease P complex"/>
    <property type="evidence" value="ECO:0007669"/>
    <property type="project" value="TreeGrafter"/>
</dbReference>
<dbReference type="GO" id="GO:0042781">
    <property type="term" value="F:3'-tRNA processing endoribonuclease activity"/>
    <property type="evidence" value="ECO:0007669"/>
    <property type="project" value="TreeGrafter"/>
</dbReference>
<dbReference type="GO" id="GO:0004526">
    <property type="term" value="F:ribonuclease P activity"/>
    <property type="evidence" value="ECO:0007669"/>
    <property type="project" value="UniProtKB-UniRule"/>
</dbReference>
<dbReference type="GO" id="GO:0000049">
    <property type="term" value="F:tRNA binding"/>
    <property type="evidence" value="ECO:0007669"/>
    <property type="project" value="UniProtKB-UniRule"/>
</dbReference>
<dbReference type="GO" id="GO:0001682">
    <property type="term" value="P:tRNA 5'-leader removal"/>
    <property type="evidence" value="ECO:0007669"/>
    <property type="project" value="UniProtKB-UniRule"/>
</dbReference>
<dbReference type="Gene3D" id="3.30.230.10">
    <property type="match status" value="1"/>
</dbReference>
<dbReference type="HAMAP" id="MF_00227">
    <property type="entry name" value="RNase_P"/>
    <property type="match status" value="1"/>
</dbReference>
<dbReference type="InterPro" id="IPR020568">
    <property type="entry name" value="Ribosomal_Su5_D2-typ_SF"/>
</dbReference>
<dbReference type="InterPro" id="IPR014721">
    <property type="entry name" value="Ribsml_uS5_D2-typ_fold_subgr"/>
</dbReference>
<dbReference type="InterPro" id="IPR000100">
    <property type="entry name" value="RNase_P"/>
</dbReference>
<dbReference type="InterPro" id="IPR020539">
    <property type="entry name" value="RNase_P_CS"/>
</dbReference>
<dbReference type="NCBIfam" id="TIGR00188">
    <property type="entry name" value="rnpA"/>
    <property type="match status" value="1"/>
</dbReference>
<dbReference type="PANTHER" id="PTHR33992">
    <property type="entry name" value="RIBONUCLEASE P PROTEIN COMPONENT"/>
    <property type="match status" value="1"/>
</dbReference>
<dbReference type="PANTHER" id="PTHR33992:SF1">
    <property type="entry name" value="RIBONUCLEASE P PROTEIN COMPONENT"/>
    <property type="match status" value="1"/>
</dbReference>
<dbReference type="Pfam" id="PF00825">
    <property type="entry name" value="Ribonuclease_P"/>
    <property type="match status" value="1"/>
</dbReference>
<dbReference type="SUPFAM" id="SSF54211">
    <property type="entry name" value="Ribosomal protein S5 domain 2-like"/>
    <property type="match status" value="1"/>
</dbReference>
<dbReference type="PROSITE" id="PS00648">
    <property type="entry name" value="RIBONUCLEASE_P"/>
    <property type="match status" value="1"/>
</dbReference>
<name>RNPA_NOCFA</name>